<name>KAIB_PROMT</name>
<dbReference type="EMBL" id="CP000095">
    <property type="protein sequence ID" value="AAZ58405.1"/>
    <property type="molecule type" value="Genomic_DNA"/>
</dbReference>
<dbReference type="RefSeq" id="WP_011295262.1">
    <property type="nucleotide sequence ID" value="NC_007335.2"/>
</dbReference>
<dbReference type="SMR" id="Q46JC3"/>
<dbReference type="STRING" id="59920.PMN2A_0914"/>
<dbReference type="KEGG" id="pmn:PMN2A_0914"/>
<dbReference type="HOGENOM" id="CLU_144073_0_0_3"/>
<dbReference type="OrthoDB" id="5458519at2"/>
<dbReference type="PhylomeDB" id="Q46JC3"/>
<dbReference type="Proteomes" id="UP000002535">
    <property type="component" value="Chromosome"/>
</dbReference>
<dbReference type="GO" id="GO:0007623">
    <property type="term" value="P:circadian rhythm"/>
    <property type="evidence" value="ECO:0007669"/>
    <property type="project" value="UniProtKB-UniRule"/>
</dbReference>
<dbReference type="CDD" id="cd02978">
    <property type="entry name" value="KaiB_like"/>
    <property type="match status" value="1"/>
</dbReference>
<dbReference type="Gene3D" id="3.40.30.10">
    <property type="entry name" value="Glutaredoxin"/>
    <property type="match status" value="1"/>
</dbReference>
<dbReference type="HAMAP" id="MF_01835">
    <property type="entry name" value="KaiB"/>
    <property type="match status" value="1"/>
</dbReference>
<dbReference type="InterPro" id="IPR013474">
    <property type="entry name" value="Circ_KaiB"/>
</dbReference>
<dbReference type="InterPro" id="IPR039022">
    <property type="entry name" value="KaiB-like"/>
</dbReference>
<dbReference type="InterPro" id="IPR011649">
    <property type="entry name" value="KaiB_domain"/>
</dbReference>
<dbReference type="InterPro" id="IPR036249">
    <property type="entry name" value="Thioredoxin-like_sf"/>
</dbReference>
<dbReference type="NCBIfam" id="TIGR02654">
    <property type="entry name" value="circ_KaiB"/>
    <property type="match status" value="1"/>
</dbReference>
<dbReference type="NCBIfam" id="NF006798">
    <property type="entry name" value="PRK09301.1"/>
    <property type="match status" value="1"/>
</dbReference>
<dbReference type="PANTHER" id="PTHR41709:SF2">
    <property type="entry name" value="CIRCADIAN CLOCK PROTEIN KAIB2"/>
    <property type="match status" value="1"/>
</dbReference>
<dbReference type="PANTHER" id="PTHR41709">
    <property type="entry name" value="KAIB-LIKE PROTEIN 1"/>
    <property type="match status" value="1"/>
</dbReference>
<dbReference type="Pfam" id="PF07689">
    <property type="entry name" value="KaiB"/>
    <property type="match status" value="1"/>
</dbReference>
<dbReference type="SMART" id="SM01248">
    <property type="entry name" value="KaiB"/>
    <property type="match status" value="1"/>
</dbReference>
<dbReference type="SUPFAM" id="SSF52833">
    <property type="entry name" value="Thioredoxin-like"/>
    <property type="match status" value="1"/>
</dbReference>
<reference key="1">
    <citation type="journal article" date="2007" name="PLoS Genet.">
        <title>Patterns and implications of gene gain and loss in the evolution of Prochlorococcus.</title>
        <authorList>
            <person name="Kettler G.C."/>
            <person name="Martiny A.C."/>
            <person name="Huang K."/>
            <person name="Zucker J."/>
            <person name="Coleman M.L."/>
            <person name="Rodrigue S."/>
            <person name="Chen F."/>
            <person name="Lapidus A."/>
            <person name="Ferriera S."/>
            <person name="Johnson J."/>
            <person name="Steglich C."/>
            <person name="Church G.M."/>
            <person name="Richardson P."/>
            <person name="Chisholm S.W."/>
        </authorList>
    </citation>
    <scope>NUCLEOTIDE SEQUENCE [LARGE SCALE GENOMIC DNA]</scope>
    <source>
        <strain>NATL2A</strain>
    </source>
</reference>
<protein>
    <recommendedName>
        <fullName evidence="1">Circadian clock oscillator protein KaiB</fullName>
    </recommendedName>
</protein>
<accession>Q46JC3</accession>
<proteinExistence type="inferred from homology"/>
<comment type="function">
    <text evidence="1">Component of the KaiBC clock protein complex, which constitutes the main circadian regulator in cyanobacteria; it may modify the ATPase activity of KaiC.</text>
</comment>
<comment type="function">
    <text evidence="1">May be a metamorphic protein which reversibly switches between an inactive tetrameric fold and a rare, thioredoxin-like monomeric fold (KaiB(fs)). KaiB(fs) binds phospho-KaiC, and perhaps clock output effectors.</text>
</comment>
<comment type="subunit">
    <text evidence="1">May undergo a major conformational rearrangment; in the free state forms homooligomers. When bound to KaiC switches to a monomeric thioredoxin-fold (KaiB(fs)). The active oscillator complex is probably KaiC(6):KaiB(6).</text>
</comment>
<comment type="domain">
    <text evidence="1">Has 2 forms, fold switches to a thioredoxin-like fold (KaiB(fs)) when bound to KaiC.</text>
</comment>
<comment type="miscellaneous">
    <text evidence="1">The kiaA gene has been eliminated from Prochlorococcus during genome streamlining. It has been suggested that the central oscillator in Prochlorococcus does not have to be as robust as in other cyanobacteria because the former live in specific niches of the Earth's oceans; they divide exactly once a day and at the same time. Thus gene loss and changes in kaiB function compared to other cyanobacteria, can occur.</text>
</comment>
<comment type="similarity">
    <text evidence="1">Belongs to the KaiB family.</text>
</comment>
<feature type="chain" id="PRO_1000070460" description="Circadian clock oscillator protein KaiB">
    <location>
        <begin position="1"/>
        <end position="107"/>
    </location>
</feature>
<gene>
    <name evidence="1" type="primary">kaiB</name>
    <name type="ordered locus">PMN2A_0914</name>
</gene>
<organism>
    <name type="scientific">Prochlorococcus marinus (strain NATL2A)</name>
    <dbReference type="NCBI Taxonomy" id="59920"/>
    <lineage>
        <taxon>Bacteria</taxon>
        <taxon>Bacillati</taxon>
        <taxon>Cyanobacteriota</taxon>
        <taxon>Cyanophyceae</taxon>
        <taxon>Synechococcales</taxon>
        <taxon>Prochlorococcaceae</taxon>
        <taxon>Prochlorococcus</taxon>
    </lineage>
</organism>
<evidence type="ECO:0000255" key="1">
    <source>
        <dbReference type="HAMAP-Rule" id="MF_01835"/>
    </source>
</evidence>
<keyword id="KW-0090">Biological rhythms</keyword>
<keyword id="KW-1185">Reference proteome</keyword>
<sequence length="107" mass="12128">MNARKTYILKLYVAGNTPNSMRALNTLREILESEFKGVYALKVIDVLKSPQLAEEDKILATPTLSKILPPPVRRIIGDLSDREKVLIGLDLLYDELSDNEMFYSSDK</sequence>